<protein>
    <recommendedName>
        <fullName>Replicative DNA helicase DnaB</fullName>
        <ecNumber evidence="1">5.6.2.3</ecNumber>
    </recommendedName>
    <alternativeName>
        <fullName evidence="3">DNA 5'-3' helicase DnaB</fullName>
    </alternativeName>
</protein>
<sequence length="465" mass="52721">MVYPIYMAKNKSYLHQINRLKIPPHSLEAEQSVLGGLMLDNEQWDSVSEHVVADDFFSKPHRLIFQEMQQLLDLGHPIDLITLSESLEQKGKLESVGRFSYLAELSKNTPSTANIIAYADIIRERAIVREMILVANKIANAGYDTQGRKSEELLDYAESSVFKIAEKRFKKDSGPKNIEQILDETVTSIEKLFLSPNDGVTGINTGYQDLNKKTSGLQPSELIIIAARPSMGKTTFAMNLCENAAMLYDKPVLIFSLEMPGEQIMMRMLASLSRVNQARIRTGQLNDEDWSRMSGTINVLLKKKNIYIDDSSALTPSEVRSRARRIYRENKGLTLIMVDYLQLMRVPSLSDNRTLEIAEISRTLKALAKELQVPVIALSQLNRSLEQRSDKRPVNSDLRESGSLEQDADLIMFIYRDEIYHENSDFKGVAEIIIGKQRNGPIGTICLTFNGHWSRFDNYCGPKYD</sequence>
<keyword id="KW-0067">ATP-binding</keyword>
<keyword id="KW-0235">DNA replication</keyword>
<keyword id="KW-0238">DNA-binding</keyword>
<keyword id="KW-0347">Helicase</keyword>
<keyword id="KW-0378">Hydrolase</keyword>
<keyword id="KW-0413">Isomerase</keyword>
<keyword id="KW-0547">Nucleotide-binding</keyword>
<keyword id="KW-0639">Primosome</keyword>
<proteinExistence type="inferred from homology"/>
<accession>Q8K932</accession>
<name>DNAB_BUCAP</name>
<evidence type="ECO:0000250" key="1">
    <source>
        <dbReference type="UniProtKB" id="P0ACB0"/>
    </source>
</evidence>
<evidence type="ECO:0000255" key="2">
    <source>
        <dbReference type="PROSITE-ProRule" id="PRU00596"/>
    </source>
</evidence>
<evidence type="ECO:0000305" key="3"/>
<feature type="chain" id="PRO_0000102017" description="Replicative DNA helicase DnaB">
    <location>
        <begin position="1"/>
        <end position="465"/>
    </location>
</feature>
<feature type="domain" description="SF4 helicase" evidence="2">
    <location>
        <begin position="196"/>
        <end position="463"/>
    </location>
</feature>
<feature type="binding site" evidence="2">
    <location>
        <begin position="227"/>
        <end position="234"/>
    </location>
    <ligand>
        <name>ATP</name>
        <dbReference type="ChEBI" id="CHEBI:30616"/>
    </ligand>
</feature>
<dbReference type="EC" id="5.6.2.3" evidence="1"/>
<dbReference type="EMBL" id="AE013218">
    <property type="protein sequence ID" value="AAM68069.1"/>
    <property type="molecule type" value="Genomic_DNA"/>
</dbReference>
<dbReference type="RefSeq" id="WP_011054035.1">
    <property type="nucleotide sequence ID" value="NC_004061.1"/>
</dbReference>
<dbReference type="SMR" id="Q8K932"/>
<dbReference type="STRING" id="198804.BUsg_528"/>
<dbReference type="GeneID" id="93004003"/>
<dbReference type="KEGG" id="bas:BUsg_528"/>
<dbReference type="eggNOG" id="COG0305">
    <property type="taxonomic scope" value="Bacteria"/>
</dbReference>
<dbReference type="HOGENOM" id="CLU_005373_0_0_6"/>
<dbReference type="Proteomes" id="UP000000416">
    <property type="component" value="Chromosome"/>
</dbReference>
<dbReference type="GO" id="GO:0005829">
    <property type="term" value="C:cytosol"/>
    <property type="evidence" value="ECO:0007669"/>
    <property type="project" value="TreeGrafter"/>
</dbReference>
<dbReference type="GO" id="GO:1990077">
    <property type="term" value="C:primosome complex"/>
    <property type="evidence" value="ECO:0007669"/>
    <property type="project" value="UniProtKB-KW"/>
</dbReference>
<dbReference type="GO" id="GO:0005524">
    <property type="term" value="F:ATP binding"/>
    <property type="evidence" value="ECO:0007669"/>
    <property type="project" value="UniProtKB-KW"/>
</dbReference>
<dbReference type="GO" id="GO:0016887">
    <property type="term" value="F:ATP hydrolysis activity"/>
    <property type="evidence" value="ECO:0007669"/>
    <property type="project" value="InterPro"/>
</dbReference>
<dbReference type="GO" id="GO:0003677">
    <property type="term" value="F:DNA binding"/>
    <property type="evidence" value="ECO:0007669"/>
    <property type="project" value="UniProtKB-KW"/>
</dbReference>
<dbReference type="GO" id="GO:0003678">
    <property type="term" value="F:DNA helicase activity"/>
    <property type="evidence" value="ECO:0007669"/>
    <property type="project" value="InterPro"/>
</dbReference>
<dbReference type="GO" id="GO:0006269">
    <property type="term" value="P:DNA replication, synthesis of primer"/>
    <property type="evidence" value="ECO:0007669"/>
    <property type="project" value="UniProtKB-KW"/>
</dbReference>
<dbReference type="CDD" id="cd00984">
    <property type="entry name" value="DnaB_C"/>
    <property type="match status" value="1"/>
</dbReference>
<dbReference type="FunFam" id="1.10.860.10:FF:000002">
    <property type="entry name" value="Replicative DNA helicase"/>
    <property type="match status" value="1"/>
</dbReference>
<dbReference type="FunFam" id="3.40.50.300:FF:000076">
    <property type="entry name" value="Replicative DNA helicase"/>
    <property type="match status" value="1"/>
</dbReference>
<dbReference type="Gene3D" id="1.10.860.10">
    <property type="entry name" value="DNAb Helicase, Chain A"/>
    <property type="match status" value="1"/>
</dbReference>
<dbReference type="Gene3D" id="3.40.50.300">
    <property type="entry name" value="P-loop containing nucleotide triphosphate hydrolases"/>
    <property type="match status" value="1"/>
</dbReference>
<dbReference type="InterPro" id="IPR003593">
    <property type="entry name" value="AAA+_ATPase"/>
</dbReference>
<dbReference type="InterPro" id="IPR036185">
    <property type="entry name" value="DNA_heli_DnaB-like_N_sf"/>
</dbReference>
<dbReference type="InterPro" id="IPR007692">
    <property type="entry name" value="DNA_helicase_DnaB"/>
</dbReference>
<dbReference type="InterPro" id="IPR007694">
    <property type="entry name" value="DNA_helicase_DnaB-like_C"/>
</dbReference>
<dbReference type="InterPro" id="IPR007693">
    <property type="entry name" value="DNA_helicase_DnaB-like_N"/>
</dbReference>
<dbReference type="InterPro" id="IPR016136">
    <property type="entry name" value="DNA_helicase_N/primase_C"/>
</dbReference>
<dbReference type="InterPro" id="IPR027417">
    <property type="entry name" value="P-loop_NTPase"/>
</dbReference>
<dbReference type="NCBIfam" id="TIGR00665">
    <property type="entry name" value="DnaB"/>
    <property type="match status" value="1"/>
</dbReference>
<dbReference type="NCBIfam" id="NF004384">
    <property type="entry name" value="PRK05748.1"/>
    <property type="match status" value="1"/>
</dbReference>
<dbReference type="PANTHER" id="PTHR30153:SF2">
    <property type="entry name" value="REPLICATIVE DNA HELICASE"/>
    <property type="match status" value="1"/>
</dbReference>
<dbReference type="PANTHER" id="PTHR30153">
    <property type="entry name" value="REPLICATIVE DNA HELICASE DNAB"/>
    <property type="match status" value="1"/>
</dbReference>
<dbReference type="Pfam" id="PF00772">
    <property type="entry name" value="DnaB"/>
    <property type="match status" value="1"/>
</dbReference>
<dbReference type="Pfam" id="PF03796">
    <property type="entry name" value="DnaB_C"/>
    <property type="match status" value="1"/>
</dbReference>
<dbReference type="SMART" id="SM00382">
    <property type="entry name" value="AAA"/>
    <property type="match status" value="1"/>
</dbReference>
<dbReference type="SUPFAM" id="SSF48024">
    <property type="entry name" value="N-terminal domain of DnaB helicase"/>
    <property type="match status" value="1"/>
</dbReference>
<dbReference type="SUPFAM" id="SSF52540">
    <property type="entry name" value="P-loop containing nucleoside triphosphate hydrolases"/>
    <property type="match status" value="1"/>
</dbReference>
<dbReference type="PROSITE" id="PS51199">
    <property type="entry name" value="SF4_HELICASE"/>
    <property type="match status" value="1"/>
</dbReference>
<reference key="1">
    <citation type="journal article" date="2002" name="Science">
        <title>50 million years of genomic stasis in endosymbiotic bacteria.</title>
        <authorList>
            <person name="Tamas I."/>
            <person name="Klasson L."/>
            <person name="Canbaeck B."/>
            <person name="Naeslund A.K."/>
            <person name="Eriksson A.-S."/>
            <person name="Wernegreen J.J."/>
            <person name="Sandstroem J.P."/>
            <person name="Moran N.A."/>
            <person name="Andersson S.G.E."/>
        </authorList>
    </citation>
    <scope>NUCLEOTIDE SEQUENCE [LARGE SCALE GENOMIC DNA]</scope>
    <source>
        <strain>Sg</strain>
    </source>
</reference>
<comment type="function">
    <text evidence="1">The main replicative DNA helicase, it participates in initiation and elongation during chromosome replication. Travels ahead of the DNA replisome, separating dsDNA into templates for DNA synthesis. A processive ATP-dependent 5'-3' DNA helicase it has DNA-dependent ATPase activity.</text>
</comment>
<comment type="catalytic activity">
    <reaction evidence="1">
        <text>Couples ATP hydrolysis with the unwinding of duplex DNA at the replication fork by translocating in the 5'-3' direction. This creates two antiparallel DNA single strands (ssDNA). The leading ssDNA polymer is the template for DNA polymerase III holoenzyme which synthesizes a continuous strand.</text>
        <dbReference type="EC" id="5.6.2.3"/>
    </reaction>
</comment>
<comment type="catalytic activity">
    <reaction evidence="1">
        <text>ATP + H2O = ADP + phosphate + H(+)</text>
        <dbReference type="Rhea" id="RHEA:13065"/>
        <dbReference type="ChEBI" id="CHEBI:15377"/>
        <dbReference type="ChEBI" id="CHEBI:15378"/>
        <dbReference type="ChEBI" id="CHEBI:30616"/>
        <dbReference type="ChEBI" id="CHEBI:43474"/>
        <dbReference type="ChEBI" id="CHEBI:456216"/>
        <dbReference type="EC" id="5.6.2.3"/>
    </reaction>
</comment>
<comment type="subunit">
    <text evidence="1">Homohexamer.</text>
</comment>
<comment type="similarity">
    <text evidence="3">Belongs to the helicase family. DnaB subfamily.</text>
</comment>
<gene>
    <name type="primary">dnaB</name>
    <name type="ordered locus">BUsg_528</name>
</gene>
<organism>
    <name type="scientific">Buchnera aphidicola subsp. Schizaphis graminum (strain Sg)</name>
    <dbReference type="NCBI Taxonomy" id="198804"/>
    <lineage>
        <taxon>Bacteria</taxon>
        <taxon>Pseudomonadati</taxon>
        <taxon>Pseudomonadota</taxon>
        <taxon>Gammaproteobacteria</taxon>
        <taxon>Enterobacterales</taxon>
        <taxon>Erwiniaceae</taxon>
        <taxon>Buchnera</taxon>
    </lineage>
</organism>